<organism>
    <name type="scientific">Brucella ovis (strain ATCC 25840 / 63/290 / NCTC 10512)</name>
    <dbReference type="NCBI Taxonomy" id="444178"/>
    <lineage>
        <taxon>Bacteria</taxon>
        <taxon>Pseudomonadati</taxon>
        <taxon>Pseudomonadota</taxon>
        <taxon>Alphaproteobacteria</taxon>
        <taxon>Hyphomicrobiales</taxon>
        <taxon>Brucellaceae</taxon>
        <taxon>Brucella/Ochrobactrum group</taxon>
        <taxon>Brucella</taxon>
    </lineage>
</organism>
<evidence type="ECO:0000255" key="1">
    <source>
        <dbReference type="HAMAP-Rule" id="MF_00034"/>
    </source>
</evidence>
<protein>
    <recommendedName>
        <fullName evidence="1">Crossover junction endodeoxyribonuclease RuvC</fullName>
        <ecNumber evidence="1">3.1.21.10</ecNumber>
    </recommendedName>
    <alternativeName>
        <fullName evidence="1">Holliday junction nuclease RuvC</fullName>
    </alternativeName>
    <alternativeName>
        <fullName evidence="1">Holliday junction resolvase RuvC</fullName>
    </alternativeName>
</protein>
<name>RUVC_BRUO2</name>
<comment type="function">
    <text evidence="1">The RuvA-RuvB-RuvC complex processes Holliday junction (HJ) DNA during genetic recombination and DNA repair. Endonuclease that resolves HJ intermediates. Cleaves cruciform DNA by making single-stranded nicks across the HJ at symmetrical positions within the homologous arms, yielding a 5'-phosphate and a 3'-hydroxyl group; requires a central core of homology in the junction. The consensus cleavage sequence is 5'-(A/T)TT(C/G)-3'. Cleavage occurs on the 3'-side of the TT dinucleotide at the point of strand exchange. HJ branch migration catalyzed by RuvA-RuvB allows RuvC to scan DNA until it finds its consensus sequence, where it cleaves and resolves the cruciform DNA.</text>
</comment>
<comment type="catalytic activity">
    <reaction evidence="1">
        <text>Endonucleolytic cleavage at a junction such as a reciprocal single-stranded crossover between two homologous DNA duplexes (Holliday junction).</text>
        <dbReference type="EC" id="3.1.21.10"/>
    </reaction>
</comment>
<comment type="cofactor">
    <cofactor evidence="1">
        <name>Mg(2+)</name>
        <dbReference type="ChEBI" id="CHEBI:18420"/>
    </cofactor>
    <text evidence="1">Binds 2 Mg(2+) ion per subunit.</text>
</comment>
<comment type="subunit">
    <text evidence="1">Homodimer which binds Holliday junction (HJ) DNA. The HJ becomes 2-fold symmetrical on binding to RuvC with unstacked arms; it has a different conformation from HJ DNA in complex with RuvA. In the full resolvosome a probable DNA-RuvA(4)-RuvB(12)-RuvC(2) complex forms which resolves the HJ.</text>
</comment>
<comment type="subcellular location">
    <subcellularLocation>
        <location evidence="1">Cytoplasm</location>
    </subcellularLocation>
</comment>
<comment type="similarity">
    <text evidence="1">Belongs to the RuvC family.</text>
</comment>
<reference key="1">
    <citation type="journal article" date="2009" name="PLoS ONE">
        <title>Genome degradation in Brucella ovis corresponds with narrowing of its host range and tissue tropism.</title>
        <authorList>
            <person name="Tsolis R.M."/>
            <person name="Seshadri R."/>
            <person name="Santos R.L."/>
            <person name="Sangari F.J."/>
            <person name="Lobo J.M."/>
            <person name="de Jong M.F."/>
            <person name="Ren Q."/>
            <person name="Myers G."/>
            <person name="Brinkac L.M."/>
            <person name="Nelson W.C."/>
            <person name="Deboy R.T."/>
            <person name="Angiuoli S."/>
            <person name="Khouri H."/>
            <person name="Dimitrov G."/>
            <person name="Robinson J.R."/>
            <person name="Mulligan S."/>
            <person name="Walker R.L."/>
            <person name="Elzer P.E."/>
            <person name="Hassan K.A."/>
            <person name="Paulsen I.T."/>
        </authorList>
    </citation>
    <scope>NUCLEOTIDE SEQUENCE [LARGE SCALE GENOMIC DNA]</scope>
    <source>
        <strain>ATCC 25840 / 63/290 / NCTC 10512</strain>
    </source>
</reference>
<dbReference type="EC" id="3.1.21.10" evidence="1"/>
<dbReference type="EMBL" id="CP000708">
    <property type="protein sequence ID" value="ABQ61579.1"/>
    <property type="molecule type" value="Genomic_DNA"/>
</dbReference>
<dbReference type="RefSeq" id="WP_002964793.1">
    <property type="nucleotide sequence ID" value="NC_009505.1"/>
</dbReference>
<dbReference type="SMR" id="A5VS60"/>
<dbReference type="GeneID" id="93017933"/>
<dbReference type="KEGG" id="bov:BOV_1647"/>
<dbReference type="HOGENOM" id="CLU_091257_1_0_5"/>
<dbReference type="PhylomeDB" id="A5VS60"/>
<dbReference type="Proteomes" id="UP000006383">
    <property type="component" value="Chromosome I"/>
</dbReference>
<dbReference type="GO" id="GO:0005737">
    <property type="term" value="C:cytoplasm"/>
    <property type="evidence" value="ECO:0007669"/>
    <property type="project" value="UniProtKB-SubCell"/>
</dbReference>
<dbReference type="GO" id="GO:0048476">
    <property type="term" value="C:Holliday junction resolvase complex"/>
    <property type="evidence" value="ECO:0007669"/>
    <property type="project" value="UniProtKB-UniRule"/>
</dbReference>
<dbReference type="GO" id="GO:0008821">
    <property type="term" value="F:crossover junction DNA endonuclease activity"/>
    <property type="evidence" value="ECO:0007669"/>
    <property type="project" value="UniProtKB-UniRule"/>
</dbReference>
<dbReference type="GO" id="GO:0003677">
    <property type="term" value="F:DNA binding"/>
    <property type="evidence" value="ECO:0007669"/>
    <property type="project" value="UniProtKB-KW"/>
</dbReference>
<dbReference type="GO" id="GO:0000287">
    <property type="term" value="F:magnesium ion binding"/>
    <property type="evidence" value="ECO:0007669"/>
    <property type="project" value="UniProtKB-UniRule"/>
</dbReference>
<dbReference type="GO" id="GO:0006310">
    <property type="term" value="P:DNA recombination"/>
    <property type="evidence" value="ECO:0007669"/>
    <property type="project" value="UniProtKB-UniRule"/>
</dbReference>
<dbReference type="GO" id="GO:0006281">
    <property type="term" value="P:DNA repair"/>
    <property type="evidence" value="ECO:0007669"/>
    <property type="project" value="UniProtKB-UniRule"/>
</dbReference>
<dbReference type="CDD" id="cd16962">
    <property type="entry name" value="RuvC"/>
    <property type="match status" value="1"/>
</dbReference>
<dbReference type="FunFam" id="3.30.420.10:FF:000002">
    <property type="entry name" value="Crossover junction endodeoxyribonuclease RuvC"/>
    <property type="match status" value="1"/>
</dbReference>
<dbReference type="Gene3D" id="3.30.420.10">
    <property type="entry name" value="Ribonuclease H-like superfamily/Ribonuclease H"/>
    <property type="match status" value="1"/>
</dbReference>
<dbReference type="HAMAP" id="MF_00034">
    <property type="entry name" value="RuvC"/>
    <property type="match status" value="1"/>
</dbReference>
<dbReference type="InterPro" id="IPR012337">
    <property type="entry name" value="RNaseH-like_sf"/>
</dbReference>
<dbReference type="InterPro" id="IPR036397">
    <property type="entry name" value="RNaseH_sf"/>
</dbReference>
<dbReference type="InterPro" id="IPR020563">
    <property type="entry name" value="X-over_junc_endoDNase_Mg_BS"/>
</dbReference>
<dbReference type="InterPro" id="IPR002176">
    <property type="entry name" value="X-over_junc_endoDNase_RuvC"/>
</dbReference>
<dbReference type="NCBIfam" id="TIGR00228">
    <property type="entry name" value="ruvC"/>
    <property type="match status" value="1"/>
</dbReference>
<dbReference type="PANTHER" id="PTHR30194">
    <property type="entry name" value="CROSSOVER JUNCTION ENDODEOXYRIBONUCLEASE RUVC"/>
    <property type="match status" value="1"/>
</dbReference>
<dbReference type="PANTHER" id="PTHR30194:SF3">
    <property type="entry name" value="CROSSOVER JUNCTION ENDODEOXYRIBONUCLEASE RUVC"/>
    <property type="match status" value="1"/>
</dbReference>
<dbReference type="Pfam" id="PF02075">
    <property type="entry name" value="RuvC"/>
    <property type="match status" value="1"/>
</dbReference>
<dbReference type="PRINTS" id="PR00696">
    <property type="entry name" value="RSOLVASERUVC"/>
</dbReference>
<dbReference type="SUPFAM" id="SSF53098">
    <property type="entry name" value="Ribonuclease H-like"/>
    <property type="match status" value="1"/>
</dbReference>
<dbReference type="PROSITE" id="PS01321">
    <property type="entry name" value="RUVC"/>
    <property type="match status" value="1"/>
</dbReference>
<proteinExistence type="inferred from homology"/>
<keyword id="KW-0963">Cytoplasm</keyword>
<keyword id="KW-0227">DNA damage</keyword>
<keyword id="KW-0233">DNA recombination</keyword>
<keyword id="KW-0234">DNA repair</keyword>
<keyword id="KW-0238">DNA-binding</keyword>
<keyword id="KW-0255">Endonuclease</keyword>
<keyword id="KW-0378">Hydrolase</keyword>
<keyword id="KW-0460">Magnesium</keyword>
<keyword id="KW-0479">Metal-binding</keyword>
<keyword id="KW-0540">Nuclease</keyword>
<feature type="chain" id="PRO_1000002726" description="Crossover junction endodeoxyribonuclease RuvC">
    <location>
        <begin position="1"/>
        <end position="173"/>
    </location>
</feature>
<feature type="active site" evidence="1">
    <location>
        <position position="11"/>
    </location>
</feature>
<feature type="active site" evidence="1">
    <location>
        <position position="71"/>
    </location>
</feature>
<feature type="active site" evidence="1">
    <location>
        <position position="143"/>
    </location>
</feature>
<feature type="binding site" evidence="1">
    <location>
        <position position="11"/>
    </location>
    <ligand>
        <name>Mg(2+)</name>
        <dbReference type="ChEBI" id="CHEBI:18420"/>
        <label>1</label>
    </ligand>
</feature>
<feature type="binding site" evidence="1">
    <location>
        <position position="71"/>
    </location>
    <ligand>
        <name>Mg(2+)</name>
        <dbReference type="ChEBI" id="CHEBI:18420"/>
        <label>2</label>
    </ligand>
</feature>
<feature type="binding site" evidence="1">
    <location>
        <position position="143"/>
    </location>
    <ligand>
        <name>Mg(2+)</name>
        <dbReference type="ChEBI" id="CHEBI:18420"/>
        <label>1</label>
    </ligand>
</feature>
<sequence>MKETIRIIGIDPGLRRTGWGIVESLGNSLHFIGSGTVTSNAEMDLASRLCQLHEGLSKVLHEFMPHEAAVEHTFVNKDATATLKLGQARGIALLAPAQAGLPVAEYAPNAVKKAVIGVGHGEKQQIHMMVKVLMPRASFDTSDAADALAIAICHAHHRQSIVSARRMQALLAG</sequence>
<accession>A5VS60</accession>
<gene>
    <name evidence="1" type="primary">ruvC</name>
    <name type="ordered locus">BOV_1647</name>
</gene>